<gene>
    <name evidence="1" type="primary">leuC</name>
    <name type="ordered locus">NATL1_03341</name>
</gene>
<keyword id="KW-0004">4Fe-4S</keyword>
<keyword id="KW-0028">Amino-acid biosynthesis</keyword>
<keyword id="KW-0100">Branched-chain amino acid biosynthesis</keyword>
<keyword id="KW-0408">Iron</keyword>
<keyword id="KW-0411">Iron-sulfur</keyword>
<keyword id="KW-0432">Leucine biosynthesis</keyword>
<keyword id="KW-0456">Lyase</keyword>
<keyword id="KW-0479">Metal-binding</keyword>
<evidence type="ECO:0000255" key="1">
    <source>
        <dbReference type="HAMAP-Rule" id="MF_01026"/>
    </source>
</evidence>
<comment type="function">
    <text evidence="1">Catalyzes the isomerization between 2-isopropylmalate and 3-isopropylmalate, via the formation of 2-isopropylmaleate.</text>
</comment>
<comment type="catalytic activity">
    <reaction evidence="1">
        <text>(2R,3S)-3-isopropylmalate = (2S)-2-isopropylmalate</text>
        <dbReference type="Rhea" id="RHEA:32287"/>
        <dbReference type="ChEBI" id="CHEBI:1178"/>
        <dbReference type="ChEBI" id="CHEBI:35121"/>
        <dbReference type="EC" id="4.2.1.33"/>
    </reaction>
</comment>
<comment type="cofactor">
    <cofactor evidence="1">
        <name>[4Fe-4S] cluster</name>
        <dbReference type="ChEBI" id="CHEBI:49883"/>
    </cofactor>
    <text evidence="1">Binds 1 [4Fe-4S] cluster per subunit.</text>
</comment>
<comment type="pathway">
    <text evidence="1">Amino-acid biosynthesis; L-leucine biosynthesis; L-leucine from 3-methyl-2-oxobutanoate: step 2/4.</text>
</comment>
<comment type="subunit">
    <text evidence="1">Heterodimer of LeuC and LeuD.</text>
</comment>
<comment type="similarity">
    <text evidence="1">Belongs to the aconitase/IPM isomerase family. LeuC type 1 subfamily.</text>
</comment>
<organism>
    <name type="scientific">Prochlorococcus marinus (strain NATL1A)</name>
    <dbReference type="NCBI Taxonomy" id="167555"/>
    <lineage>
        <taxon>Bacteria</taxon>
        <taxon>Bacillati</taxon>
        <taxon>Cyanobacteriota</taxon>
        <taxon>Cyanophyceae</taxon>
        <taxon>Synechococcales</taxon>
        <taxon>Prochlorococcaceae</taxon>
        <taxon>Prochlorococcus</taxon>
    </lineage>
</organism>
<protein>
    <recommendedName>
        <fullName evidence="1">3-isopropylmalate dehydratase large subunit</fullName>
        <ecNumber evidence="1">4.2.1.33</ecNumber>
    </recommendedName>
    <alternativeName>
        <fullName evidence="1">Alpha-IPM isomerase</fullName>
        <shortName evidence="1">IPMI</shortName>
    </alternativeName>
    <alternativeName>
        <fullName evidence="1">Isopropylmalate isomerase</fullName>
    </alternativeName>
</protein>
<sequence length="469" mass="51032">MSSRTLYDKVWNFHQVKELPGGSTQLFIGLHLIHEVTSPQAFSALNEKKLGVKFPNLTVATVDHIVPTSNQQRPFSDPLAEEMLSTLEKNCKTHGIKFHGIGSNSQGVVHVMAPELGLTQPGMTVACGDSHTSTHGAFGAIAFGIGTSQVRDVLASQSLAMNKLKVRRIWVEGELQKGVYAKDLILHIIRHLGVKGGVGFAYEFAGPAIEKLSMEGRMTICNMAIEGGARCGYINPDETTFKYLKGKEHAPKGQEWDKAISWWKSLASDSKATFDDEIQLDGSSIEPTVTWGITPGQGISIKETIPNPEFLPKNEQQIAKDACKYMNLKPDEPIEGQSIDVCFIGSCTNGRLSDLQEASKIVKGNTVADGIRAFVVPGSQKVAKEAKEKGLDKIFLKAGFEWREPGCSMCLAMNPDKLEGRQISASSSNRNFKGRQGSAKGRTLLMSPAMVAAAAINGRVTDVRKFLQE</sequence>
<name>LEUC_PROM1</name>
<dbReference type="EC" id="4.2.1.33" evidence="1"/>
<dbReference type="EMBL" id="CP000553">
    <property type="protein sequence ID" value="ABM74898.1"/>
    <property type="molecule type" value="Genomic_DNA"/>
</dbReference>
<dbReference type="RefSeq" id="WP_011823105.1">
    <property type="nucleotide sequence ID" value="NC_008819.1"/>
</dbReference>
<dbReference type="SMR" id="A2C088"/>
<dbReference type="KEGG" id="pme:NATL1_03341"/>
<dbReference type="eggNOG" id="COG0065">
    <property type="taxonomic scope" value="Bacteria"/>
</dbReference>
<dbReference type="HOGENOM" id="CLU_006714_3_4_3"/>
<dbReference type="UniPathway" id="UPA00048">
    <property type="reaction ID" value="UER00071"/>
</dbReference>
<dbReference type="Proteomes" id="UP000002592">
    <property type="component" value="Chromosome"/>
</dbReference>
<dbReference type="GO" id="GO:0003861">
    <property type="term" value="F:3-isopropylmalate dehydratase activity"/>
    <property type="evidence" value="ECO:0007669"/>
    <property type="project" value="UniProtKB-UniRule"/>
</dbReference>
<dbReference type="GO" id="GO:0051539">
    <property type="term" value="F:4 iron, 4 sulfur cluster binding"/>
    <property type="evidence" value="ECO:0007669"/>
    <property type="project" value="UniProtKB-KW"/>
</dbReference>
<dbReference type="GO" id="GO:0046872">
    <property type="term" value="F:metal ion binding"/>
    <property type="evidence" value="ECO:0007669"/>
    <property type="project" value="UniProtKB-KW"/>
</dbReference>
<dbReference type="GO" id="GO:0009098">
    <property type="term" value="P:L-leucine biosynthetic process"/>
    <property type="evidence" value="ECO:0007669"/>
    <property type="project" value="UniProtKB-UniRule"/>
</dbReference>
<dbReference type="CDD" id="cd01583">
    <property type="entry name" value="IPMI"/>
    <property type="match status" value="1"/>
</dbReference>
<dbReference type="Gene3D" id="3.30.499.10">
    <property type="entry name" value="Aconitase, domain 3"/>
    <property type="match status" value="2"/>
</dbReference>
<dbReference type="HAMAP" id="MF_01026">
    <property type="entry name" value="LeuC_type1"/>
    <property type="match status" value="1"/>
</dbReference>
<dbReference type="InterPro" id="IPR004430">
    <property type="entry name" value="3-IsopropMal_deHydase_lsu"/>
</dbReference>
<dbReference type="InterPro" id="IPR015931">
    <property type="entry name" value="Acnase/IPM_dHydase_lsu_aba_1/3"/>
</dbReference>
<dbReference type="InterPro" id="IPR001030">
    <property type="entry name" value="Acoase/IPM_deHydtase_lsu_aba"/>
</dbReference>
<dbReference type="InterPro" id="IPR018136">
    <property type="entry name" value="Aconitase_4Fe-4S_BS"/>
</dbReference>
<dbReference type="InterPro" id="IPR036008">
    <property type="entry name" value="Aconitase_4Fe-4S_dom"/>
</dbReference>
<dbReference type="InterPro" id="IPR050067">
    <property type="entry name" value="IPM_dehydratase_rel_enz"/>
</dbReference>
<dbReference type="InterPro" id="IPR033941">
    <property type="entry name" value="IPMI_cat"/>
</dbReference>
<dbReference type="NCBIfam" id="TIGR00170">
    <property type="entry name" value="leuC"/>
    <property type="match status" value="1"/>
</dbReference>
<dbReference type="NCBIfam" id="NF004016">
    <property type="entry name" value="PRK05478.1"/>
    <property type="match status" value="1"/>
</dbReference>
<dbReference type="NCBIfam" id="NF009116">
    <property type="entry name" value="PRK12466.1"/>
    <property type="match status" value="1"/>
</dbReference>
<dbReference type="PANTHER" id="PTHR43822:SF9">
    <property type="entry name" value="3-ISOPROPYLMALATE DEHYDRATASE"/>
    <property type="match status" value="1"/>
</dbReference>
<dbReference type="PANTHER" id="PTHR43822">
    <property type="entry name" value="HOMOACONITASE, MITOCHONDRIAL-RELATED"/>
    <property type="match status" value="1"/>
</dbReference>
<dbReference type="Pfam" id="PF00330">
    <property type="entry name" value="Aconitase"/>
    <property type="match status" value="1"/>
</dbReference>
<dbReference type="PRINTS" id="PR00415">
    <property type="entry name" value="ACONITASE"/>
</dbReference>
<dbReference type="SUPFAM" id="SSF53732">
    <property type="entry name" value="Aconitase iron-sulfur domain"/>
    <property type="match status" value="1"/>
</dbReference>
<dbReference type="PROSITE" id="PS00450">
    <property type="entry name" value="ACONITASE_1"/>
    <property type="match status" value="1"/>
</dbReference>
<dbReference type="PROSITE" id="PS01244">
    <property type="entry name" value="ACONITASE_2"/>
    <property type="match status" value="1"/>
</dbReference>
<reference key="1">
    <citation type="journal article" date="2007" name="PLoS Genet.">
        <title>Patterns and implications of gene gain and loss in the evolution of Prochlorococcus.</title>
        <authorList>
            <person name="Kettler G.C."/>
            <person name="Martiny A.C."/>
            <person name="Huang K."/>
            <person name="Zucker J."/>
            <person name="Coleman M.L."/>
            <person name="Rodrigue S."/>
            <person name="Chen F."/>
            <person name="Lapidus A."/>
            <person name="Ferriera S."/>
            <person name="Johnson J."/>
            <person name="Steglich C."/>
            <person name="Church G.M."/>
            <person name="Richardson P."/>
            <person name="Chisholm S.W."/>
        </authorList>
    </citation>
    <scope>NUCLEOTIDE SEQUENCE [LARGE SCALE GENOMIC DNA]</scope>
    <source>
        <strain>NATL1A</strain>
    </source>
</reference>
<feature type="chain" id="PRO_1000063583" description="3-isopropylmalate dehydratase large subunit">
    <location>
        <begin position="1"/>
        <end position="469"/>
    </location>
</feature>
<feature type="binding site" evidence="1">
    <location>
        <position position="347"/>
    </location>
    <ligand>
        <name>[4Fe-4S] cluster</name>
        <dbReference type="ChEBI" id="CHEBI:49883"/>
    </ligand>
</feature>
<feature type="binding site" evidence="1">
    <location>
        <position position="407"/>
    </location>
    <ligand>
        <name>[4Fe-4S] cluster</name>
        <dbReference type="ChEBI" id="CHEBI:49883"/>
    </ligand>
</feature>
<feature type="binding site" evidence="1">
    <location>
        <position position="410"/>
    </location>
    <ligand>
        <name>[4Fe-4S] cluster</name>
        <dbReference type="ChEBI" id="CHEBI:49883"/>
    </ligand>
</feature>
<proteinExistence type="inferred from homology"/>
<accession>A2C088</accession>